<dbReference type="EMBL" id="X03000">
    <property type="protein sequence ID" value="CAA26764.1"/>
    <property type="molecule type" value="Genomic_DNA"/>
</dbReference>
<dbReference type="PIR" id="A03854">
    <property type="entry name" value="SXAD97"/>
</dbReference>
<dbReference type="RefSeq" id="AP_000537.1">
    <property type="nucleotide sequence ID" value="AC_000018.1"/>
</dbReference>
<dbReference type="SMR" id="P68971"/>
<dbReference type="GO" id="GO:0042025">
    <property type="term" value="C:host cell nucleus"/>
    <property type="evidence" value="ECO:0007669"/>
    <property type="project" value="UniProtKB-SubCell"/>
</dbReference>
<dbReference type="GO" id="GO:0098021">
    <property type="term" value="C:viral capsid, decoration"/>
    <property type="evidence" value="ECO:0007669"/>
    <property type="project" value="UniProtKB-UniRule"/>
</dbReference>
<dbReference type="GO" id="GO:0031423">
    <property type="term" value="F:hexon binding"/>
    <property type="evidence" value="ECO:0007669"/>
    <property type="project" value="InterPro"/>
</dbReference>
<dbReference type="GO" id="GO:0046718">
    <property type="term" value="P:symbiont entry into host cell"/>
    <property type="evidence" value="ECO:0007669"/>
    <property type="project" value="UniProtKB-UniRule"/>
</dbReference>
<dbReference type="Gene3D" id="6.10.250.3040">
    <property type="match status" value="1"/>
</dbReference>
<dbReference type="HAMAP" id="MF_04050">
    <property type="entry name" value="ADV_CAP9"/>
    <property type="match status" value="1"/>
</dbReference>
<dbReference type="InterPro" id="IPR005641">
    <property type="entry name" value="Hexon_assoc_IX"/>
</dbReference>
<dbReference type="Pfam" id="PF03955">
    <property type="entry name" value="Adeno_PIX"/>
    <property type="match status" value="1"/>
</dbReference>
<proteinExistence type="inferred from homology"/>
<feature type="chain" id="PRO_0000221847" description="Hexon-interlacing protein" evidence="1">
    <location>
        <begin position="1"/>
        <end position="138"/>
    </location>
</feature>
<feature type="coiled-coil region" evidence="1">
    <location>
        <begin position="100"/>
        <end position="127"/>
    </location>
</feature>
<protein>
    <recommendedName>
        <fullName evidence="1">Hexon-interlacing protein</fullName>
    </recommendedName>
    <alternativeName>
        <fullName evidence="1">Protein IX</fullName>
    </alternativeName>
</protein>
<organism>
    <name type="scientific">Human adenovirus B serotype 7</name>
    <name type="common">HAdV-7</name>
    <name type="synonym">Human adenovirus 7</name>
    <dbReference type="NCBI Taxonomy" id="10519"/>
    <lineage>
        <taxon>Viruses</taxon>
        <taxon>Varidnaviria</taxon>
        <taxon>Bamfordvirae</taxon>
        <taxon>Preplasmiviricota</taxon>
        <taxon>Tectiliviricetes</taxon>
        <taxon>Rowavirales</taxon>
        <taxon>Adenoviridae</taxon>
        <taxon>Mastadenovirus</taxon>
        <taxon>Human mastadenovirus B</taxon>
    </lineage>
</organism>
<sequence length="138" mass="14107">MSGSASFEGGVFSPYLTGRLPPWAGVRQNVMGSTVDGRPVQPANSSTLTYATLSSSPLDAAAAAAATAAANTILGMGYYGSIVANSSSSNNPSTLAEDKLLVLLAQLEALTQRLGELSKQVAQLREQTESAVATAKSK</sequence>
<accession>P68971</accession>
<accession>P03283</accession>
<evidence type="ECO:0000255" key="1">
    <source>
        <dbReference type="HAMAP-Rule" id="MF_04050"/>
    </source>
</evidence>
<organismHost>
    <name type="scientific">Homo sapiens</name>
    <name type="common">Human</name>
    <dbReference type="NCBI Taxonomy" id="9606"/>
</organismHost>
<name>CAP9_ADE07</name>
<keyword id="KW-1232">Capsid decoration protein</keyword>
<keyword id="KW-0167">Capsid protein</keyword>
<keyword id="KW-0175">Coiled coil</keyword>
<keyword id="KW-1048">Host nucleus</keyword>
<keyword id="KW-0945">Host-virus interaction</keyword>
<keyword id="KW-0946">Virion</keyword>
<keyword id="KW-1160">Virus entry into host cell</keyword>
<reference key="1">
    <citation type="journal article" date="1981" name="Gene">
        <title>The gene for polypeptide IX of human adenovirus type 7.</title>
        <authorList>
            <person name="Dijkema R."/>
            <person name="Maat J."/>
            <person name="Dekker B.M.M."/>
            <person name="van Ormondt H."/>
            <person name="Boyer H.W."/>
        </authorList>
    </citation>
    <scope>NUCLEOTIDE SEQUENCE [GENOMIC DNA]</scope>
    <source>
        <strain>Gomen</strain>
    </source>
</reference>
<gene>
    <name evidence="1" type="primary">IX</name>
</gene>
<comment type="function">
    <text evidence="1">Structural component of the virion that acts as a cement protein on the capsid exterior and forms triskelion structures consisting of three molecules that stabilize three hexon trimers at the center of each icosahedral facet and fixes the peripentonal hexons. Dispensable for assembly. During virus entry, recruits the anterograde motor kinesin-1 to the capsid docked at the nuclear pore complex thereby subjecting the docked capsid to a pulling force. The resulting tension leads to capsid disruption, dispersion of capsid fragments toward cell periphery and eventually viral DNA entry into the host nucleus.</text>
</comment>
<comment type="subunit">
    <text evidence="1">Homotrimer. Interacts with hexon protein; this interaction tethers the hexons together. Self-interacts with adjacent proteins. Interacts with kinesin light chain KLC1; this interaction leads to capsid disruption at the nuclear pore complex during virus entry into host cell.</text>
</comment>
<comment type="subcellular location">
    <subcellularLocation>
        <location evidence="1">Virion</location>
    </subcellularLocation>
    <subcellularLocation>
        <location evidence="1">Host nucleus</location>
    </subcellularLocation>
    <text evidence="1">Located in the canyons between the hexons on the outer surface of the capsid. Forms a sort of hairnet on the outer side of the virion. Present in 240 copies per virion.</text>
</comment>
<comment type="induction">
    <text evidence="1">Expressed in the intermediate phase of the viral replicative cycle.</text>
</comment>
<comment type="domain">
    <text evidence="1">Three N-terminal domains of hexon-interlacing protein form triskelions between hexon capsomers.</text>
</comment>
<comment type="miscellaneous">
    <text evidence="1">This protein is only encoded by mastadenoviruses, and may therefore play a role in mammals tropism.</text>
</comment>
<comment type="similarity">
    <text evidence="1">Belongs to the adenoviridae hexon-interlacing protein family.</text>
</comment>